<gene>
    <name type="primary">atg17</name>
    <name type="ORF">ACLA_073510</name>
</gene>
<dbReference type="EMBL" id="DS027045">
    <property type="protein sequence ID" value="EAW14316.1"/>
    <property type="molecule type" value="Genomic_DNA"/>
</dbReference>
<dbReference type="RefSeq" id="XP_001275742.1">
    <property type="nucleotide sequence ID" value="XM_001275741.1"/>
</dbReference>
<dbReference type="SMR" id="A1C7E5"/>
<dbReference type="STRING" id="344612.A1C7E5"/>
<dbReference type="EnsemblFungi" id="EAW14316">
    <property type="protein sequence ID" value="EAW14316"/>
    <property type="gene ID" value="ACLA_073510"/>
</dbReference>
<dbReference type="GeneID" id="4707887"/>
<dbReference type="KEGG" id="act:ACLA_073510"/>
<dbReference type="VEuPathDB" id="FungiDB:ACLA_073510"/>
<dbReference type="eggNOG" id="ENOG502RYHP">
    <property type="taxonomic scope" value="Eukaryota"/>
</dbReference>
<dbReference type="HOGENOM" id="CLU_028356_0_0_1"/>
<dbReference type="OMA" id="THVWRAN"/>
<dbReference type="OrthoDB" id="1937984at2759"/>
<dbReference type="Proteomes" id="UP000006701">
    <property type="component" value="Unassembled WGS sequence"/>
</dbReference>
<dbReference type="GO" id="GO:1990316">
    <property type="term" value="C:Atg1/ULK1 kinase complex"/>
    <property type="evidence" value="ECO:0007669"/>
    <property type="project" value="TreeGrafter"/>
</dbReference>
<dbReference type="GO" id="GO:0034045">
    <property type="term" value="C:phagophore assembly site membrane"/>
    <property type="evidence" value="ECO:0007669"/>
    <property type="project" value="UniProtKB-SubCell"/>
</dbReference>
<dbReference type="GO" id="GO:0060090">
    <property type="term" value="F:molecular adaptor activity"/>
    <property type="evidence" value="ECO:0007669"/>
    <property type="project" value="TreeGrafter"/>
</dbReference>
<dbReference type="GO" id="GO:0030295">
    <property type="term" value="F:protein kinase activator activity"/>
    <property type="evidence" value="ECO:0007669"/>
    <property type="project" value="TreeGrafter"/>
</dbReference>
<dbReference type="GO" id="GO:0000045">
    <property type="term" value="P:autophagosome assembly"/>
    <property type="evidence" value="ECO:0007669"/>
    <property type="project" value="TreeGrafter"/>
</dbReference>
<dbReference type="GO" id="GO:0000422">
    <property type="term" value="P:autophagy of mitochondrion"/>
    <property type="evidence" value="ECO:0007669"/>
    <property type="project" value="TreeGrafter"/>
</dbReference>
<dbReference type="GO" id="GO:0034727">
    <property type="term" value="P:piecemeal microautophagy of the nucleus"/>
    <property type="evidence" value="ECO:0007669"/>
    <property type="project" value="TreeGrafter"/>
</dbReference>
<dbReference type="InterPro" id="IPR007240">
    <property type="entry name" value="Atg17"/>
</dbReference>
<dbReference type="InterPro" id="IPR045326">
    <property type="entry name" value="ATG17-like_dom"/>
</dbReference>
<dbReference type="PANTHER" id="PTHR28005">
    <property type="entry name" value="AUTOPHAGY-RELATED PROTEIN 17"/>
    <property type="match status" value="1"/>
</dbReference>
<dbReference type="PANTHER" id="PTHR28005:SF1">
    <property type="entry name" value="AUTOPHAGY-RELATED PROTEIN 17"/>
    <property type="match status" value="1"/>
</dbReference>
<dbReference type="Pfam" id="PF04108">
    <property type="entry name" value="ATG17_like"/>
    <property type="match status" value="1"/>
</dbReference>
<evidence type="ECO:0000250" key="1"/>
<evidence type="ECO:0000255" key="2"/>
<evidence type="ECO:0000256" key="3">
    <source>
        <dbReference type="SAM" id="MobiDB-lite"/>
    </source>
</evidence>
<evidence type="ECO:0000305" key="4"/>
<name>ATG17_ASPCL</name>
<comment type="function">
    <text evidence="1">Autophagy-specific protein that functions in response to autophagy-inducing signals as a scaffold to recruit other ATG proteins to organize pre-autophagosomal structure (PAS) formation. Modulates the timing and magnitude of the autophagy response, such as the size of the sequestering vesicles. Plays particularly a role in pexophagy and nucleophagy (By similarity).</text>
</comment>
<comment type="subcellular location">
    <subcellularLocation>
        <location evidence="1">Cytoplasm</location>
    </subcellularLocation>
    <subcellularLocation>
        <location evidence="1">Preautophagosomal structure membrane</location>
        <topology evidence="1">Peripheral membrane protein</topology>
    </subcellularLocation>
</comment>
<comment type="similarity">
    <text evidence="4">Belongs to the ATG17 family.</text>
</comment>
<sequence>MSSSESSSASGGGPPDAEPSQTEQQTMPQLDTLISHLVAAKRSLSSINHVWRANEIVTTARAALEESVVVSARTGFLRRGLNNQLRLLYSVRTEVEEISLRGRSEFAAVLKDLDAADARLRRTLELLRETIVHGGFRPEGEQPRSLHDFVDERGVEELHAALKNSIDRTNGAQAQLDSSNHAFDDELLSIKEALGNYRAVAKLASSRSSSSPSSSSASNSSLPSMSSMPSMLHSLEMHAQEMANLLESLVRHFDLCVTAVKHTEGGGAAAKSITGDMHVGVNASGRIGPNIEEGINANLNAPLDPLSDSEYREMVHVLIKDATEAEDVVMEIHDRIGEMESSLENVLAQRDALRSIYNATIDVFQHLSSLASTRLPGYIAQAHDFTRVWHEENDRIAGGLDDLAHLNSFYDGFLDAYDGLIIEVARRRHVRQRVEKVLRDAKHKLDQLYEEDVNAREAFRVEKGDYLPSDIWPEVGREPMRIEFRRILGGKVKGAVSEQANDEEPTAGEREQRGGGQENHLSAVGDNTEVDEVIPELPRDLVEQVFARIQTRVKSTT</sequence>
<keyword id="KW-0072">Autophagy</keyword>
<keyword id="KW-0175">Coiled coil</keyword>
<keyword id="KW-0963">Cytoplasm</keyword>
<keyword id="KW-0472">Membrane</keyword>
<keyword id="KW-1185">Reference proteome</keyword>
<proteinExistence type="inferred from homology"/>
<accession>A1C7E5</accession>
<organism>
    <name type="scientific">Aspergillus clavatus (strain ATCC 1007 / CBS 513.65 / DSM 816 / NCTC 3887 / NRRL 1 / QM 1276 / 107)</name>
    <dbReference type="NCBI Taxonomy" id="344612"/>
    <lineage>
        <taxon>Eukaryota</taxon>
        <taxon>Fungi</taxon>
        <taxon>Dikarya</taxon>
        <taxon>Ascomycota</taxon>
        <taxon>Pezizomycotina</taxon>
        <taxon>Eurotiomycetes</taxon>
        <taxon>Eurotiomycetidae</taxon>
        <taxon>Eurotiales</taxon>
        <taxon>Aspergillaceae</taxon>
        <taxon>Aspergillus</taxon>
        <taxon>Aspergillus subgen. Fumigati</taxon>
    </lineage>
</organism>
<reference key="1">
    <citation type="journal article" date="2008" name="PLoS Genet.">
        <title>Genomic islands in the pathogenic filamentous fungus Aspergillus fumigatus.</title>
        <authorList>
            <person name="Fedorova N.D."/>
            <person name="Khaldi N."/>
            <person name="Joardar V.S."/>
            <person name="Maiti R."/>
            <person name="Amedeo P."/>
            <person name="Anderson M.J."/>
            <person name="Crabtree J."/>
            <person name="Silva J.C."/>
            <person name="Badger J.H."/>
            <person name="Albarraq A."/>
            <person name="Angiuoli S."/>
            <person name="Bussey H."/>
            <person name="Bowyer P."/>
            <person name="Cotty P.J."/>
            <person name="Dyer P.S."/>
            <person name="Egan A."/>
            <person name="Galens K."/>
            <person name="Fraser-Liggett C.M."/>
            <person name="Haas B.J."/>
            <person name="Inman J.M."/>
            <person name="Kent R."/>
            <person name="Lemieux S."/>
            <person name="Malavazi I."/>
            <person name="Orvis J."/>
            <person name="Roemer T."/>
            <person name="Ronning C.M."/>
            <person name="Sundaram J.P."/>
            <person name="Sutton G."/>
            <person name="Turner G."/>
            <person name="Venter J.C."/>
            <person name="White O.R."/>
            <person name="Whitty B.R."/>
            <person name="Youngman P."/>
            <person name="Wolfe K.H."/>
            <person name="Goldman G.H."/>
            <person name="Wortman J.R."/>
            <person name="Jiang B."/>
            <person name="Denning D.W."/>
            <person name="Nierman W.C."/>
        </authorList>
    </citation>
    <scope>NUCLEOTIDE SEQUENCE [LARGE SCALE GENOMIC DNA]</scope>
    <source>
        <strain>ATCC 1007 / CBS 513.65 / DSM 816 / NCTC 3887 / NRRL 1 / QM 1276 / 107</strain>
    </source>
</reference>
<protein>
    <recommendedName>
        <fullName>Autophagy-related protein 17</fullName>
    </recommendedName>
</protein>
<feature type="chain" id="PRO_0000317979" description="Autophagy-related protein 17">
    <location>
        <begin position="1"/>
        <end position="557"/>
    </location>
</feature>
<feature type="region of interest" description="Disordered" evidence="3">
    <location>
        <begin position="1"/>
        <end position="25"/>
    </location>
</feature>
<feature type="region of interest" description="Disordered" evidence="3">
    <location>
        <begin position="204"/>
        <end position="227"/>
    </location>
</feature>
<feature type="region of interest" description="Disordered" evidence="3">
    <location>
        <begin position="495"/>
        <end position="532"/>
    </location>
</feature>
<feature type="coiled-coil region" evidence="2">
    <location>
        <begin position="334"/>
        <end position="355"/>
    </location>
</feature>
<feature type="coiled-coil region" evidence="2">
    <location>
        <begin position="428"/>
        <end position="458"/>
    </location>
</feature>
<feature type="compositionally biased region" description="Low complexity" evidence="3">
    <location>
        <begin position="205"/>
        <end position="227"/>
    </location>
</feature>